<organism>
    <name type="scientific">Mycoplasma genitalium (strain ATCC 33530 / DSM 19775 / NCTC 10195 / G37)</name>
    <name type="common">Mycoplasmoides genitalium</name>
    <dbReference type="NCBI Taxonomy" id="243273"/>
    <lineage>
        <taxon>Bacteria</taxon>
        <taxon>Bacillati</taxon>
        <taxon>Mycoplasmatota</taxon>
        <taxon>Mycoplasmoidales</taxon>
        <taxon>Mycoplasmoidaceae</taxon>
        <taxon>Mycoplasmoides</taxon>
    </lineage>
</organism>
<gene>
    <name type="ordered locus">MG374</name>
</gene>
<sequence>MDRKIVVLDINTANFFNTTKDLEVWKNFFNFIQANNHQLVFMSSCWQQAVLYLLDLLSLDDVDIIAESGAIIWISKTNEFIYQSFLDSVSIDTIVHHAIITNSGVFAIGKSKISEEPNTTINYFISLEKYKQFKLIWLTEFDQTLKYQNFLKNLSEMDVSSIYVFSPQYHLDFQLMEHISSGQPKFHYSNFYNENFLFTSTKNSKFSALETYVKSKNCSLKDVHYLNVTEVPINNINQLASVVFLSKKQPDNDEEFNNPEISIVLKGICEQLMK</sequence>
<accession>P47614</accession>
<protein>
    <recommendedName>
        <fullName>Uncharacterized protein MG374</fullName>
    </recommendedName>
</protein>
<proteinExistence type="predicted"/>
<feature type="chain" id="PRO_0000210576" description="Uncharacterized protein MG374">
    <location>
        <begin position="1"/>
        <end position="274"/>
    </location>
</feature>
<feature type="binding site" evidence="1">
    <location>
        <begin position="104"/>
        <end position="111"/>
    </location>
    <ligand>
        <name>ATP</name>
        <dbReference type="ChEBI" id="CHEBI:30616"/>
    </ligand>
</feature>
<name>Y374_MYCGE</name>
<dbReference type="EMBL" id="L43967">
    <property type="protein sequence ID" value="AAC71601.1"/>
    <property type="molecule type" value="Genomic_DNA"/>
</dbReference>
<dbReference type="PIR" id="D64241">
    <property type="entry name" value="D64241"/>
</dbReference>
<dbReference type="RefSeq" id="WP_010869456.1">
    <property type="nucleotide sequence ID" value="NC_000908.2"/>
</dbReference>
<dbReference type="STRING" id="243273.MG_374"/>
<dbReference type="GeneID" id="88282557"/>
<dbReference type="KEGG" id="mge:MG_374"/>
<dbReference type="eggNOG" id="ENOG5031YZZ">
    <property type="taxonomic scope" value="Bacteria"/>
</dbReference>
<dbReference type="HOGENOM" id="CLU_1014967_0_0_14"/>
<dbReference type="InParanoid" id="P47614"/>
<dbReference type="Proteomes" id="UP000000807">
    <property type="component" value="Chromosome"/>
</dbReference>
<dbReference type="GO" id="GO:0005524">
    <property type="term" value="F:ATP binding"/>
    <property type="evidence" value="ECO:0007669"/>
    <property type="project" value="UniProtKB-KW"/>
</dbReference>
<dbReference type="InterPro" id="IPR036412">
    <property type="entry name" value="HAD-like_sf"/>
</dbReference>
<dbReference type="NCBIfam" id="NF045755">
    <property type="entry name" value="MPN552"/>
    <property type="match status" value="1"/>
</dbReference>
<dbReference type="Pfam" id="PF08282">
    <property type="entry name" value="Hydrolase_3"/>
    <property type="match status" value="1"/>
</dbReference>
<dbReference type="SUPFAM" id="SSF56784">
    <property type="entry name" value="HAD-like"/>
    <property type="match status" value="1"/>
</dbReference>
<evidence type="ECO:0000255" key="1"/>
<reference key="1">
    <citation type="journal article" date="1995" name="Science">
        <title>The minimal gene complement of Mycoplasma genitalium.</title>
        <authorList>
            <person name="Fraser C.M."/>
            <person name="Gocayne J.D."/>
            <person name="White O."/>
            <person name="Adams M.D."/>
            <person name="Clayton R.A."/>
            <person name="Fleischmann R.D."/>
            <person name="Bult C.J."/>
            <person name="Kerlavage A.R."/>
            <person name="Sutton G.G."/>
            <person name="Kelley J.M."/>
            <person name="Fritchman J.L."/>
            <person name="Weidman J.F."/>
            <person name="Small K.V."/>
            <person name="Sandusky M."/>
            <person name="Fuhrmann J.L."/>
            <person name="Nguyen D.T."/>
            <person name="Utterback T.R."/>
            <person name="Saudek D.M."/>
            <person name="Phillips C.A."/>
            <person name="Merrick J.M."/>
            <person name="Tomb J.-F."/>
            <person name="Dougherty B.A."/>
            <person name="Bott K.F."/>
            <person name="Hu P.-C."/>
            <person name="Lucier T.S."/>
            <person name="Peterson S.N."/>
            <person name="Smith H.O."/>
            <person name="Hutchison C.A. III"/>
            <person name="Venter J.C."/>
        </authorList>
    </citation>
    <scope>NUCLEOTIDE SEQUENCE [LARGE SCALE GENOMIC DNA]</scope>
    <source>
        <strain>ATCC 33530 / DSM 19775 / NCTC 10195 / G37</strain>
    </source>
</reference>
<keyword id="KW-0067">ATP-binding</keyword>
<keyword id="KW-0547">Nucleotide-binding</keyword>
<keyword id="KW-1185">Reference proteome</keyword>